<name>XNI_ECOHS</name>
<proteinExistence type="inferred from homology"/>
<evidence type="ECO:0000255" key="1">
    <source>
        <dbReference type="HAMAP-Rule" id="MF_01192"/>
    </source>
</evidence>
<evidence type="ECO:0000305" key="2"/>
<gene>
    <name evidence="1" type="primary">xni</name>
    <name evidence="1" type="synonym">ygdG</name>
    <name type="ordered locus">EcHS_A2942</name>
</gene>
<protein>
    <recommendedName>
        <fullName evidence="1">Flap endonuclease Xni</fullName>
        <shortName evidence="1">FEN</shortName>
        <ecNumber evidence="1">3.1.-.-</ecNumber>
    </recommendedName>
</protein>
<organism>
    <name type="scientific">Escherichia coli O9:H4 (strain HS)</name>
    <dbReference type="NCBI Taxonomy" id="331112"/>
    <lineage>
        <taxon>Bacteria</taxon>
        <taxon>Pseudomonadati</taxon>
        <taxon>Pseudomonadota</taxon>
        <taxon>Gammaproteobacteria</taxon>
        <taxon>Enterobacterales</taxon>
        <taxon>Enterobacteriaceae</taxon>
        <taxon>Escherichia</taxon>
    </lineage>
</organism>
<comment type="function">
    <text evidence="1">Has flap endonuclease activity. During DNA replication, flap endonucleases cleave the 5'-overhanging flap structure that is generated by displacement synthesis when DNA polymerase encounters the 5'-end of a downstream Okazaki fragment.</text>
</comment>
<comment type="cofactor">
    <cofactor evidence="1">
        <name>Mg(2+)</name>
        <dbReference type="ChEBI" id="CHEBI:18420"/>
    </cofactor>
    <text evidence="1">Binds 2 Mg(2+) per subunit. Only one magnesium ion has a direct interaction with the protein, the other interactions are indirect.</text>
</comment>
<comment type="cofactor">
    <cofactor evidence="1">
        <name>K(+)</name>
        <dbReference type="ChEBI" id="CHEBI:29103"/>
    </cofactor>
    <text evidence="1">Binds 1 K(+) per subunit. The potassium ion strongly increases the affinity for DNA.</text>
</comment>
<comment type="similarity">
    <text evidence="1">Belongs to the Xni family.</text>
</comment>
<comment type="sequence caution" evidence="2">
    <conflict type="erroneous initiation">
        <sequence resource="EMBL-CDS" id="ABV07187"/>
    </conflict>
    <text>Extended N-terminus.</text>
</comment>
<dbReference type="EC" id="3.1.-.-" evidence="1"/>
<dbReference type="EMBL" id="CP000802">
    <property type="protein sequence ID" value="ABV07187.1"/>
    <property type="status" value="ALT_INIT"/>
    <property type="molecule type" value="Genomic_DNA"/>
</dbReference>
<dbReference type="RefSeq" id="WP_000268232.1">
    <property type="nucleotide sequence ID" value="NC_009800.1"/>
</dbReference>
<dbReference type="SMR" id="A8A3T3"/>
<dbReference type="GeneID" id="93779200"/>
<dbReference type="KEGG" id="ecx:EcHS_A2942"/>
<dbReference type="HOGENOM" id="CLU_004675_1_2_6"/>
<dbReference type="GO" id="GO:0008409">
    <property type="term" value="F:5'-3' exonuclease activity"/>
    <property type="evidence" value="ECO:0007669"/>
    <property type="project" value="InterPro"/>
</dbReference>
<dbReference type="GO" id="GO:0017108">
    <property type="term" value="F:5'-flap endonuclease activity"/>
    <property type="evidence" value="ECO:0007669"/>
    <property type="project" value="UniProtKB-UniRule"/>
</dbReference>
<dbReference type="GO" id="GO:0003677">
    <property type="term" value="F:DNA binding"/>
    <property type="evidence" value="ECO:0007669"/>
    <property type="project" value="UniProtKB-UniRule"/>
</dbReference>
<dbReference type="GO" id="GO:0000287">
    <property type="term" value="F:magnesium ion binding"/>
    <property type="evidence" value="ECO:0007669"/>
    <property type="project" value="UniProtKB-UniRule"/>
</dbReference>
<dbReference type="GO" id="GO:0030955">
    <property type="term" value="F:potassium ion binding"/>
    <property type="evidence" value="ECO:0007669"/>
    <property type="project" value="UniProtKB-UniRule"/>
</dbReference>
<dbReference type="GO" id="GO:0033567">
    <property type="term" value="P:DNA replication, Okazaki fragment processing"/>
    <property type="evidence" value="ECO:0007669"/>
    <property type="project" value="UniProtKB-UniRule"/>
</dbReference>
<dbReference type="CDD" id="cd09898">
    <property type="entry name" value="H3TH_53EXO"/>
    <property type="match status" value="1"/>
</dbReference>
<dbReference type="CDD" id="cd09859">
    <property type="entry name" value="PIN_53EXO"/>
    <property type="match status" value="1"/>
</dbReference>
<dbReference type="FunFam" id="1.10.150.20:FF:000003">
    <property type="entry name" value="DNA polymerase I"/>
    <property type="match status" value="1"/>
</dbReference>
<dbReference type="FunFam" id="3.40.50.1010:FF:000011">
    <property type="entry name" value="Flap endonuclease Xni"/>
    <property type="match status" value="1"/>
</dbReference>
<dbReference type="Gene3D" id="1.10.150.20">
    <property type="entry name" value="5' to 3' exonuclease, C-terminal subdomain"/>
    <property type="match status" value="1"/>
</dbReference>
<dbReference type="Gene3D" id="3.40.50.1010">
    <property type="entry name" value="5'-nuclease"/>
    <property type="match status" value="1"/>
</dbReference>
<dbReference type="HAMAP" id="MF_01192">
    <property type="entry name" value="Xni"/>
    <property type="match status" value="1"/>
</dbReference>
<dbReference type="InterPro" id="IPR020046">
    <property type="entry name" value="5-3_exonucl_a-hlix_arch_N"/>
</dbReference>
<dbReference type="InterPro" id="IPR002421">
    <property type="entry name" value="5-3_exonuclease"/>
</dbReference>
<dbReference type="InterPro" id="IPR036279">
    <property type="entry name" value="5-3_exonuclease_C_sf"/>
</dbReference>
<dbReference type="InterPro" id="IPR020045">
    <property type="entry name" value="DNA_polI_H3TH"/>
</dbReference>
<dbReference type="InterPro" id="IPR038969">
    <property type="entry name" value="FEN"/>
</dbReference>
<dbReference type="InterPro" id="IPR008918">
    <property type="entry name" value="HhH2"/>
</dbReference>
<dbReference type="InterPro" id="IPR029060">
    <property type="entry name" value="PIN-like_dom_sf"/>
</dbReference>
<dbReference type="InterPro" id="IPR022895">
    <property type="entry name" value="Xni"/>
</dbReference>
<dbReference type="NCBIfam" id="NF007017">
    <property type="entry name" value="PRK09482.1"/>
    <property type="match status" value="1"/>
</dbReference>
<dbReference type="PANTHER" id="PTHR42646:SF2">
    <property type="entry name" value="5'-3' EXONUCLEASE FAMILY PROTEIN"/>
    <property type="match status" value="1"/>
</dbReference>
<dbReference type="PANTHER" id="PTHR42646">
    <property type="entry name" value="FLAP ENDONUCLEASE XNI"/>
    <property type="match status" value="1"/>
</dbReference>
<dbReference type="Pfam" id="PF01367">
    <property type="entry name" value="5_3_exonuc"/>
    <property type="match status" value="1"/>
</dbReference>
<dbReference type="Pfam" id="PF02739">
    <property type="entry name" value="5_3_exonuc_N"/>
    <property type="match status" value="1"/>
</dbReference>
<dbReference type="SMART" id="SM00475">
    <property type="entry name" value="53EXOc"/>
    <property type="match status" value="1"/>
</dbReference>
<dbReference type="SMART" id="SM00279">
    <property type="entry name" value="HhH2"/>
    <property type="match status" value="1"/>
</dbReference>
<dbReference type="SUPFAM" id="SSF47807">
    <property type="entry name" value="5' to 3' exonuclease, C-terminal subdomain"/>
    <property type="match status" value="1"/>
</dbReference>
<dbReference type="SUPFAM" id="SSF88723">
    <property type="entry name" value="PIN domain-like"/>
    <property type="match status" value="1"/>
</dbReference>
<accession>A8A3T3</accession>
<feature type="chain" id="PRO_1000065879" description="Flap endonuclease Xni">
    <location>
        <begin position="1"/>
        <end position="251"/>
    </location>
</feature>
<feature type="domain" description="5'-3' exonuclease" evidence="1">
    <location>
        <begin position="160"/>
        <end position="249"/>
    </location>
</feature>
<feature type="region of interest" description="Interaction with DNA" evidence="1">
    <location>
        <begin position="184"/>
        <end position="189"/>
    </location>
</feature>
<feature type="binding site" evidence="1">
    <location>
        <position position="104"/>
    </location>
    <ligand>
        <name>Mg(2+)</name>
        <dbReference type="ChEBI" id="CHEBI:18420"/>
    </ligand>
</feature>
<feature type="binding site" evidence="1">
    <location>
        <position position="171"/>
    </location>
    <ligand>
        <name>K(+)</name>
        <dbReference type="ChEBI" id="CHEBI:29103"/>
    </ligand>
</feature>
<feature type="binding site" evidence="1">
    <location>
        <position position="172"/>
    </location>
    <ligand>
        <name>K(+)</name>
        <dbReference type="ChEBI" id="CHEBI:29103"/>
    </ligand>
</feature>
<feature type="binding site" evidence="1">
    <location>
        <position position="180"/>
    </location>
    <ligand>
        <name>K(+)</name>
        <dbReference type="ChEBI" id="CHEBI:29103"/>
    </ligand>
</feature>
<feature type="binding site" evidence="1">
    <location>
        <position position="182"/>
    </location>
    <ligand>
        <name>K(+)</name>
        <dbReference type="ChEBI" id="CHEBI:29103"/>
    </ligand>
</feature>
<feature type="binding site" evidence="1">
    <location>
        <position position="185"/>
    </location>
    <ligand>
        <name>K(+)</name>
        <dbReference type="ChEBI" id="CHEBI:29103"/>
    </ligand>
</feature>
<sequence length="251" mass="28166">MAVHLLIVDALNLIRRIHAVQGSPCVETCQHALDQLIMHSQPTHAVAVFDDENRSSGWRHQRLPDYKAGRPPMPEELHDEMPALRAAFEQRGVPCWSTSGNEADDLAATLAVKVTQAGHQATIVSTDKGYCQLLSPTLRIRDYFQKRWLDAPFIDKEFGVQPQQLPDYWGLAGISSSKVPGVAGIGPKSATQLLVEFQSLEGIYENLDAVAEKWRKKLETHKEMAFLCRDIARLQTDLHIDGNLQQLRLVR</sequence>
<reference key="1">
    <citation type="journal article" date="2008" name="J. Bacteriol.">
        <title>The pangenome structure of Escherichia coli: comparative genomic analysis of E. coli commensal and pathogenic isolates.</title>
        <authorList>
            <person name="Rasko D.A."/>
            <person name="Rosovitz M.J."/>
            <person name="Myers G.S.A."/>
            <person name="Mongodin E.F."/>
            <person name="Fricke W.F."/>
            <person name="Gajer P."/>
            <person name="Crabtree J."/>
            <person name="Sebaihia M."/>
            <person name="Thomson N.R."/>
            <person name="Chaudhuri R."/>
            <person name="Henderson I.R."/>
            <person name="Sperandio V."/>
            <person name="Ravel J."/>
        </authorList>
    </citation>
    <scope>NUCLEOTIDE SEQUENCE [LARGE SCALE GENOMIC DNA]</scope>
    <source>
        <strain>HS</strain>
    </source>
</reference>
<keyword id="KW-0238">DNA-binding</keyword>
<keyword id="KW-0255">Endonuclease</keyword>
<keyword id="KW-0378">Hydrolase</keyword>
<keyword id="KW-0460">Magnesium</keyword>
<keyword id="KW-0479">Metal-binding</keyword>
<keyword id="KW-0540">Nuclease</keyword>
<keyword id="KW-0630">Potassium</keyword>